<sequence length="216" mass="23932">MKIFLDTANLDEIRRGVEWGVVDGVTTNPTLISKEGKPFEETIKEICNIVQGPISAEVISLNFEGMIDEARNLAKIDENIVIKIPMTPNGIKAVKVLSKEGIKTNVTLIFSPNQALLAAKAGATYVSPFVGRVDDLANDGLKIVEEIMQIYENYGFETEVIVASVRHPMHVLEAALIGADIATVPFSVLEKMFKHPMTDIGIERFLKDWEKYKTGR</sequence>
<protein>
    <recommendedName>
        <fullName evidence="1">Probable transaldolase</fullName>
        <ecNumber evidence="1">2.2.1.2</ecNumber>
    </recommendedName>
</protein>
<reference key="1">
    <citation type="journal article" date="2009" name="J. Bacteriol.">
        <title>The genome of Thermosipho africanus TCF52B: lateral genetic connections to the Firmicutes and Archaea.</title>
        <authorList>
            <person name="Nesboe C.L."/>
            <person name="Bapteste E."/>
            <person name="Curtis B."/>
            <person name="Dahle H."/>
            <person name="Lopez P."/>
            <person name="Macleod D."/>
            <person name="Dlutek M."/>
            <person name="Bowman S."/>
            <person name="Zhaxybayeva O."/>
            <person name="Birkeland N.-K."/>
            <person name="Doolittle W.F."/>
        </authorList>
    </citation>
    <scope>NUCLEOTIDE SEQUENCE [LARGE SCALE GENOMIC DNA]</scope>
    <source>
        <strain>TCF52B</strain>
    </source>
</reference>
<dbReference type="EC" id="2.2.1.2" evidence="1"/>
<dbReference type="EMBL" id="CP001185">
    <property type="protein sequence ID" value="ACJ76256.1"/>
    <property type="molecule type" value="Genomic_DNA"/>
</dbReference>
<dbReference type="RefSeq" id="WP_012580448.1">
    <property type="nucleotide sequence ID" value="NC_011653.1"/>
</dbReference>
<dbReference type="SMR" id="B7IE29"/>
<dbReference type="STRING" id="484019.THA_1825"/>
<dbReference type="KEGG" id="taf:THA_1825"/>
<dbReference type="eggNOG" id="COG0176">
    <property type="taxonomic scope" value="Bacteria"/>
</dbReference>
<dbReference type="HOGENOM" id="CLU_079764_0_0_0"/>
<dbReference type="OrthoDB" id="9807051at2"/>
<dbReference type="UniPathway" id="UPA00115">
    <property type="reaction ID" value="UER00414"/>
</dbReference>
<dbReference type="Proteomes" id="UP000002453">
    <property type="component" value="Chromosome"/>
</dbReference>
<dbReference type="GO" id="GO:0005737">
    <property type="term" value="C:cytoplasm"/>
    <property type="evidence" value="ECO:0007669"/>
    <property type="project" value="UniProtKB-SubCell"/>
</dbReference>
<dbReference type="GO" id="GO:0016832">
    <property type="term" value="F:aldehyde-lyase activity"/>
    <property type="evidence" value="ECO:0007669"/>
    <property type="project" value="InterPro"/>
</dbReference>
<dbReference type="GO" id="GO:0004801">
    <property type="term" value="F:transaldolase activity"/>
    <property type="evidence" value="ECO:0007669"/>
    <property type="project" value="UniProtKB-UniRule"/>
</dbReference>
<dbReference type="GO" id="GO:0005975">
    <property type="term" value="P:carbohydrate metabolic process"/>
    <property type="evidence" value="ECO:0007669"/>
    <property type="project" value="InterPro"/>
</dbReference>
<dbReference type="GO" id="GO:0006098">
    <property type="term" value="P:pentose-phosphate shunt"/>
    <property type="evidence" value="ECO:0007669"/>
    <property type="project" value="UniProtKB-UniRule"/>
</dbReference>
<dbReference type="CDD" id="cd00956">
    <property type="entry name" value="Transaldolase_FSA"/>
    <property type="match status" value="1"/>
</dbReference>
<dbReference type="FunFam" id="3.20.20.70:FF:000018">
    <property type="entry name" value="Probable transaldolase"/>
    <property type="match status" value="1"/>
</dbReference>
<dbReference type="Gene3D" id="3.20.20.70">
    <property type="entry name" value="Aldolase class I"/>
    <property type="match status" value="1"/>
</dbReference>
<dbReference type="HAMAP" id="MF_00494">
    <property type="entry name" value="Transaldolase_3b"/>
    <property type="match status" value="1"/>
</dbReference>
<dbReference type="InterPro" id="IPR013785">
    <property type="entry name" value="Aldolase_TIM"/>
</dbReference>
<dbReference type="InterPro" id="IPR001585">
    <property type="entry name" value="TAL/FSA"/>
</dbReference>
<dbReference type="InterPro" id="IPR022999">
    <property type="entry name" value="Transaldolase_3B"/>
</dbReference>
<dbReference type="InterPro" id="IPR004731">
    <property type="entry name" value="Transaldolase_3B/F6P_aldolase"/>
</dbReference>
<dbReference type="InterPro" id="IPR018225">
    <property type="entry name" value="Transaldolase_AS"/>
</dbReference>
<dbReference type="InterPro" id="IPR033919">
    <property type="entry name" value="TSA/FSA_arc/bac"/>
</dbReference>
<dbReference type="NCBIfam" id="TIGR00875">
    <property type="entry name" value="fsa_talC_mipB"/>
    <property type="match status" value="1"/>
</dbReference>
<dbReference type="PANTHER" id="PTHR10683:SF40">
    <property type="entry name" value="FRUCTOSE-6-PHOSPHATE ALDOLASE 1-RELATED"/>
    <property type="match status" value="1"/>
</dbReference>
<dbReference type="PANTHER" id="PTHR10683">
    <property type="entry name" value="TRANSALDOLASE"/>
    <property type="match status" value="1"/>
</dbReference>
<dbReference type="Pfam" id="PF00923">
    <property type="entry name" value="TAL_FSA"/>
    <property type="match status" value="1"/>
</dbReference>
<dbReference type="SUPFAM" id="SSF51569">
    <property type="entry name" value="Aldolase"/>
    <property type="match status" value="1"/>
</dbReference>
<dbReference type="PROSITE" id="PS01054">
    <property type="entry name" value="TRANSALDOLASE_1"/>
    <property type="match status" value="1"/>
</dbReference>
<dbReference type="PROSITE" id="PS00958">
    <property type="entry name" value="TRANSALDOLASE_2"/>
    <property type="match status" value="1"/>
</dbReference>
<name>TAL_THEAB</name>
<feature type="chain" id="PRO_1000126365" description="Probable transaldolase">
    <location>
        <begin position="1"/>
        <end position="216"/>
    </location>
</feature>
<feature type="active site" description="Schiff-base intermediate with substrate" evidence="1">
    <location>
        <position position="83"/>
    </location>
</feature>
<gene>
    <name evidence="1" type="primary">tal</name>
    <name type="ordered locus">THA_1825</name>
</gene>
<keyword id="KW-0963">Cytoplasm</keyword>
<keyword id="KW-0570">Pentose shunt</keyword>
<keyword id="KW-1185">Reference proteome</keyword>
<keyword id="KW-0704">Schiff base</keyword>
<keyword id="KW-0808">Transferase</keyword>
<proteinExistence type="inferred from homology"/>
<comment type="function">
    <text evidence="1">Transaldolase is important for the balance of metabolites in the pentose-phosphate pathway.</text>
</comment>
<comment type="catalytic activity">
    <reaction evidence="1">
        <text>D-sedoheptulose 7-phosphate + D-glyceraldehyde 3-phosphate = D-erythrose 4-phosphate + beta-D-fructose 6-phosphate</text>
        <dbReference type="Rhea" id="RHEA:17053"/>
        <dbReference type="ChEBI" id="CHEBI:16897"/>
        <dbReference type="ChEBI" id="CHEBI:57483"/>
        <dbReference type="ChEBI" id="CHEBI:57634"/>
        <dbReference type="ChEBI" id="CHEBI:59776"/>
        <dbReference type="EC" id="2.2.1.2"/>
    </reaction>
</comment>
<comment type="pathway">
    <text evidence="1">Carbohydrate degradation; pentose phosphate pathway; D-glyceraldehyde 3-phosphate and beta-D-fructose 6-phosphate from D-ribose 5-phosphate and D-xylulose 5-phosphate (non-oxidative stage): step 2/3.</text>
</comment>
<comment type="subcellular location">
    <subcellularLocation>
        <location evidence="1">Cytoplasm</location>
    </subcellularLocation>
</comment>
<comment type="similarity">
    <text evidence="1">Belongs to the transaldolase family. Type 3B subfamily.</text>
</comment>
<organism>
    <name type="scientific">Thermosipho africanus (strain TCF52B)</name>
    <dbReference type="NCBI Taxonomy" id="484019"/>
    <lineage>
        <taxon>Bacteria</taxon>
        <taxon>Thermotogati</taxon>
        <taxon>Thermotogota</taxon>
        <taxon>Thermotogae</taxon>
        <taxon>Thermotogales</taxon>
        <taxon>Fervidobacteriaceae</taxon>
        <taxon>Thermosipho</taxon>
    </lineage>
</organism>
<evidence type="ECO:0000255" key="1">
    <source>
        <dbReference type="HAMAP-Rule" id="MF_00494"/>
    </source>
</evidence>
<accession>B7IE29</accession>